<protein>
    <recommendedName>
        <fullName>Putative amino-acid transporter CPE0389</fullName>
    </recommendedName>
</protein>
<sequence length="481" mass="52759">MNDNKKLGVIALAGVVISAMLGGGVYNLPQNMAQSASAGAILISWIITGIGIWFIANTFRILAAARPDATTGIYTYGELGFGKFTGFLMAWGYWICNSFANVGYAVLLMDSLNYFFPPYFKGGNNWLSIACGSLVLWIIFFIVLAGVKQASALNVIGTIGKLLPLAIFLLVLLFSFRFSTFFTDFWGLKTVAKVHDTNLGGILPQVKSTMLVTLWVFTGIEGAVVVSGRAKSQKDVSKATFLGFITCLLIYTLLSLLPLGVYSQGEISKMAPPSTAAVLMDLIGNWGSVIMNLGVIIAILSSWLIWTVMLSELPFAAAQSGTFPKIFAKENKNESPSFSLLASTIIMQIILILVHFAGNAWNMMLSITSVMALPCYLVSTLYLFKITYKNENYPTDIFAKRKYAMITAILGSIYGVWLIYAAGINYMLIAIVIYALGIPVFIKARRETSPNEKEFTKVERYFAIVLIILALIGLVYLFKFM</sequence>
<comment type="function">
    <text>Could be an amino acid transporter.</text>
</comment>
<comment type="subcellular location">
    <subcellularLocation>
        <location>Cell membrane</location>
        <topology>Multi-pass membrane protein</topology>
    </subcellularLocation>
</comment>
<comment type="similarity">
    <text evidence="2">Belongs to the amino acid-polyamine-organocation (APC) superfamily. Basic amino acid/polyamine antiporter (APA) (TC 2.A.3.2) family.</text>
</comment>
<evidence type="ECO:0000255" key="1"/>
<evidence type="ECO:0000305" key="2"/>
<feature type="chain" id="PRO_0000054253" description="Putative amino-acid transporter CPE0389">
    <location>
        <begin position="1"/>
        <end position="481"/>
    </location>
</feature>
<feature type="transmembrane region" description="Helical" evidence="1">
    <location>
        <begin position="7"/>
        <end position="27"/>
    </location>
</feature>
<feature type="transmembrane region" description="Helical" evidence="1">
    <location>
        <begin position="36"/>
        <end position="56"/>
    </location>
</feature>
<feature type="transmembrane region" description="Helical" evidence="1">
    <location>
        <begin position="87"/>
        <end position="107"/>
    </location>
</feature>
<feature type="transmembrane region" description="Helical" evidence="1">
    <location>
        <begin position="127"/>
        <end position="147"/>
    </location>
</feature>
<feature type="transmembrane region" description="Helical" evidence="1">
    <location>
        <begin position="156"/>
        <end position="176"/>
    </location>
</feature>
<feature type="transmembrane region" description="Helical" evidence="1">
    <location>
        <begin position="208"/>
        <end position="228"/>
    </location>
</feature>
<feature type="transmembrane region" description="Helical" evidence="1">
    <location>
        <begin position="241"/>
        <end position="261"/>
    </location>
</feature>
<feature type="transmembrane region" description="Helical" evidence="1">
    <location>
        <begin position="289"/>
        <end position="309"/>
    </location>
</feature>
<feature type="transmembrane region" description="Helical" evidence="1">
    <location>
        <begin position="338"/>
        <end position="358"/>
    </location>
</feature>
<feature type="transmembrane region" description="Helical" evidence="1">
    <location>
        <begin position="364"/>
        <end position="384"/>
    </location>
</feature>
<feature type="transmembrane region" description="Helical" evidence="1">
    <location>
        <begin position="401"/>
        <end position="421"/>
    </location>
</feature>
<feature type="transmembrane region" description="Helical" evidence="1">
    <location>
        <begin position="422"/>
        <end position="442"/>
    </location>
</feature>
<feature type="transmembrane region" description="Helical" evidence="1">
    <location>
        <begin position="461"/>
        <end position="481"/>
    </location>
</feature>
<reference key="1">
    <citation type="journal article" date="2002" name="Proc. Natl. Acad. Sci. U.S.A.">
        <title>Complete genome sequence of Clostridium perfringens, an anaerobic flesh-eater.</title>
        <authorList>
            <person name="Shimizu T."/>
            <person name="Ohtani K."/>
            <person name="Hirakawa H."/>
            <person name="Ohshima K."/>
            <person name="Yamashita A."/>
            <person name="Shiba T."/>
            <person name="Ogasawara N."/>
            <person name="Hattori M."/>
            <person name="Kuhara S."/>
            <person name="Hayashi H."/>
        </authorList>
    </citation>
    <scope>NUCLEOTIDE SEQUENCE [LARGE SCALE GENOMIC DNA]</scope>
    <source>
        <strain>13 / Type A</strain>
    </source>
</reference>
<reference key="2">
    <citation type="journal article" date="1993" name="Protein Sci.">
        <title>Mammalian integral membrane receptors are homologous to facilitators and antiporters of yeast, fungi, and eubacteria.</title>
        <authorList>
            <person name="Reizer J."/>
            <person name="Finley K."/>
            <person name="Kakuda D."/>
            <person name="McLeod C.L."/>
            <person name="Reizer A."/>
            <person name="Saier M.H. Jr."/>
        </authorList>
    </citation>
    <scope>SIMILARITY TO OTHER MEMBERS OF THE FAMILY</scope>
</reference>
<name>Y389_CLOPE</name>
<accession>P0C217</accession>
<accession>P30818</accession>
<keyword id="KW-0029">Amino-acid transport</keyword>
<keyword id="KW-1003">Cell membrane</keyword>
<keyword id="KW-0472">Membrane</keyword>
<keyword id="KW-1185">Reference proteome</keyword>
<keyword id="KW-0812">Transmembrane</keyword>
<keyword id="KW-1133">Transmembrane helix</keyword>
<keyword id="KW-0813">Transport</keyword>
<organism>
    <name type="scientific">Clostridium perfringens (strain 13 / Type A)</name>
    <dbReference type="NCBI Taxonomy" id="195102"/>
    <lineage>
        <taxon>Bacteria</taxon>
        <taxon>Bacillati</taxon>
        <taxon>Bacillota</taxon>
        <taxon>Clostridia</taxon>
        <taxon>Eubacteriales</taxon>
        <taxon>Clostridiaceae</taxon>
        <taxon>Clostridium</taxon>
    </lineage>
</organism>
<gene>
    <name type="ordered locus">CPE0389</name>
</gene>
<proteinExistence type="inferred from homology"/>
<dbReference type="EMBL" id="BA000016">
    <property type="protein sequence ID" value="BAB80095.1"/>
    <property type="molecule type" value="Genomic_DNA"/>
</dbReference>
<dbReference type="RefSeq" id="WP_003455623.1">
    <property type="nucleotide sequence ID" value="NC_003366.1"/>
</dbReference>
<dbReference type="SMR" id="P0C217"/>
<dbReference type="STRING" id="195102.gene:10489645"/>
<dbReference type="KEGG" id="cpe:CPE0389"/>
<dbReference type="HOGENOM" id="CLU_007946_1_2_9"/>
<dbReference type="Proteomes" id="UP000000818">
    <property type="component" value="Chromosome"/>
</dbReference>
<dbReference type="GO" id="GO:0005886">
    <property type="term" value="C:plasma membrane"/>
    <property type="evidence" value="ECO:0007669"/>
    <property type="project" value="UniProtKB-SubCell"/>
</dbReference>
<dbReference type="GO" id="GO:0022857">
    <property type="term" value="F:transmembrane transporter activity"/>
    <property type="evidence" value="ECO:0007669"/>
    <property type="project" value="InterPro"/>
</dbReference>
<dbReference type="GO" id="GO:0006865">
    <property type="term" value="P:amino acid transport"/>
    <property type="evidence" value="ECO:0007669"/>
    <property type="project" value="UniProtKB-KW"/>
</dbReference>
<dbReference type="Gene3D" id="1.20.1740.10">
    <property type="entry name" value="Amino acid/polyamine transporter I"/>
    <property type="match status" value="1"/>
</dbReference>
<dbReference type="InterPro" id="IPR002293">
    <property type="entry name" value="AA/rel_permease1"/>
</dbReference>
<dbReference type="InterPro" id="IPR004754">
    <property type="entry name" value="Amino_acid_antiprt"/>
</dbReference>
<dbReference type="InterPro" id="IPR050367">
    <property type="entry name" value="APC_superfamily"/>
</dbReference>
<dbReference type="NCBIfam" id="TIGR00905">
    <property type="entry name" value="2A0302"/>
    <property type="match status" value="1"/>
</dbReference>
<dbReference type="PANTHER" id="PTHR42770">
    <property type="entry name" value="AMINO ACID TRANSPORTER-RELATED"/>
    <property type="match status" value="1"/>
</dbReference>
<dbReference type="PANTHER" id="PTHR42770:SF4">
    <property type="entry name" value="ARGININE_ORNITHINE ANTIPORTER-RELATED"/>
    <property type="match status" value="1"/>
</dbReference>
<dbReference type="Pfam" id="PF13520">
    <property type="entry name" value="AA_permease_2"/>
    <property type="match status" value="1"/>
</dbReference>
<dbReference type="PIRSF" id="PIRSF006060">
    <property type="entry name" value="AA_transporter"/>
    <property type="match status" value="1"/>
</dbReference>